<comment type="similarity">
    <text evidence="1">Belongs to the bacterial ribosomal protein bL27 family.</text>
</comment>
<keyword id="KW-1185">Reference proteome</keyword>
<keyword id="KW-0687">Ribonucleoprotein</keyword>
<keyword id="KW-0689">Ribosomal protein</keyword>
<sequence>MAHKKGASSSRNGRDSNAQYLGVKKFGGEAVVAGNIIVRQRGTKFHPGENVGMGKDHTLFALKDGSVKFGVRRDRKVVDVIAA</sequence>
<dbReference type="EMBL" id="AP009256">
    <property type="protein sequence ID" value="BAF39022.1"/>
    <property type="molecule type" value="Genomic_DNA"/>
</dbReference>
<dbReference type="RefSeq" id="WP_003807757.1">
    <property type="nucleotide sequence ID" value="NZ_CAXVNC010000001.1"/>
</dbReference>
<dbReference type="SMR" id="A0ZZY9"/>
<dbReference type="STRING" id="367928.BAD_0241"/>
<dbReference type="PaxDb" id="1680-BADO_0250"/>
<dbReference type="GeneID" id="97501990"/>
<dbReference type="KEGG" id="bad:BAD_0241"/>
<dbReference type="HOGENOM" id="CLU_095424_4_0_11"/>
<dbReference type="Proteomes" id="UP000008702">
    <property type="component" value="Chromosome"/>
</dbReference>
<dbReference type="GO" id="GO:0022625">
    <property type="term" value="C:cytosolic large ribosomal subunit"/>
    <property type="evidence" value="ECO:0007669"/>
    <property type="project" value="TreeGrafter"/>
</dbReference>
<dbReference type="GO" id="GO:0003735">
    <property type="term" value="F:structural constituent of ribosome"/>
    <property type="evidence" value="ECO:0007669"/>
    <property type="project" value="InterPro"/>
</dbReference>
<dbReference type="GO" id="GO:0006412">
    <property type="term" value="P:translation"/>
    <property type="evidence" value="ECO:0007669"/>
    <property type="project" value="UniProtKB-UniRule"/>
</dbReference>
<dbReference type="FunFam" id="2.40.50.100:FF:000020">
    <property type="entry name" value="50S ribosomal protein L27"/>
    <property type="match status" value="1"/>
</dbReference>
<dbReference type="Gene3D" id="2.40.50.100">
    <property type="match status" value="1"/>
</dbReference>
<dbReference type="HAMAP" id="MF_00539">
    <property type="entry name" value="Ribosomal_bL27"/>
    <property type="match status" value="1"/>
</dbReference>
<dbReference type="InterPro" id="IPR001684">
    <property type="entry name" value="Ribosomal_bL27"/>
</dbReference>
<dbReference type="InterPro" id="IPR018261">
    <property type="entry name" value="Ribosomal_bL27_CS"/>
</dbReference>
<dbReference type="NCBIfam" id="TIGR00062">
    <property type="entry name" value="L27"/>
    <property type="match status" value="1"/>
</dbReference>
<dbReference type="PANTHER" id="PTHR15893:SF0">
    <property type="entry name" value="LARGE RIBOSOMAL SUBUNIT PROTEIN BL27M"/>
    <property type="match status" value="1"/>
</dbReference>
<dbReference type="PANTHER" id="PTHR15893">
    <property type="entry name" value="RIBOSOMAL PROTEIN L27"/>
    <property type="match status" value="1"/>
</dbReference>
<dbReference type="Pfam" id="PF01016">
    <property type="entry name" value="Ribosomal_L27"/>
    <property type="match status" value="1"/>
</dbReference>
<dbReference type="PRINTS" id="PR00063">
    <property type="entry name" value="RIBOSOMALL27"/>
</dbReference>
<dbReference type="SUPFAM" id="SSF110324">
    <property type="entry name" value="Ribosomal L27 protein-like"/>
    <property type="match status" value="1"/>
</dbReference>
<dbReference type="PROSITE" id="PS00831">
    <property type="entry name" value="RIBOSOMAL_L27"/>
    <property type="match status" value="1"/>
</dbReference>
<feature type="chain" id="PRO_1000017417" description="Large ribosomal subunit protein bL27">
    <location>
        <begin position="1"/>
        <end position="83"/>
    </location>
</feature>
<gene>
    <name evidence="1" type="primary">rpmA</name>
    <name type="ordered locus">BAD_0241</name>
</gene>
<proteinExistence type="inferred from homology"/>
<evidence type="ECO:0000255" key="1">
    <source>
        <dbReference type="HAMAP-Rule" id="MF_00539"/>
    </source>
</evidence>
<evidence type="ECO:0000305" key="2"/>
<organism>
    <name type="scientific">Bifidobacterium adolescentis (strain ATCC 15703 / DSM 20083 / NCTC 11814 / E194a)</name>
    <dbReference type="NCBI Taxonomy" id="367928"/>
    <lineage>
        <taxon>Bacteria</taxon>
        <taxon>Bacillati</taxon>
        <taxon>Actinomycetota</taxon>
        <taxon>Actinomycetes</taxon>
        <taxon>Bifidobacteriales</taxon>
        <taxon>Bifidobacteriaceae</taxon>
        <taxon>Bifidobacterium</taxon>
    </lineage>
</organism>
<name>RL27_BIFAA</name>
<accession>A0ZZY9</accession>
<reference key="1">
    <citation type="submission" date="2006-12" db="EMBL/GenBank/DDBJ databases">
        <title>Bifidobacterium adolescentis complete genome sequence.</title>
        <authorList>
            <person name="Suzuki T."/>
            <person name="Tsuda Y."/>
            <person name="Kanou N."/>
            <person name="Inoue T."/>
            <person name="Kumazaki K."/>
            <person name="Nagano S."/>
            <person name="Hirai S."/>
            <person name="Tanaka K."/>
            <person name="Watanabe K."/>
        </authorList>
    </citation>
    <scope>NUCLEOTIDE SEQUENCE [LARGE SCALE GENOMIC DNA]</scope>
    <source>
        <strain>ATCC 15703 / DSM 20083 / NCTC 11814 / E194a</strain>
    </source>
</reference>
<protein>
    <recommendedName>
        <fullName evidence="1">Large ribosomal subunit protein bL27</fullName>
    </recommendedName>
    <alternativeName>
        <fullName evidence="2">50S ribosomal protein L27</fullName>
    </alternativeName>
</protein>